<reference key="1">
    <citation type="journal article" date="1999" name="Nature">
        <title>Sequence and analysis of chromosome 4 of the plant Arabidopsis thaliana.</title>
        <authorList>
            <person name="Mayer K.F.X."/>
            <person name="Schueller C."/>
            <person name="Wambutt R."/>
            <person name="Murphy G."/>
            <person name="Volckaert G."/>
            <person name="Pohl T."/>
            <person name="Duesterhoeft A."/>
            <person name="Stiekema W."/>
            <person name="Entian K.-D."/>
            <person name="Terryn N."/>
            <person name="Harris B."/>
            <person name="Ansorge W."/>
            <person name="Brandt P."/>
            <person name="Grivell L.A."/>
            <person name="Rieger M."/>
            <person name="Weichselgartner M."/>
            <person name="de Simone V."/>
            <person name="Obermaier B."/>
            <person name="Mache R."/>
            <person name="Mueller M."/>
            <person name="Kreis M."/>
            <person name="Delseny M."/>
            <person name="Puigdomenech P."/>
            <person name="Watson M."/>
            <person name="Schmidtheini T."/>
            <person name="Reichert B."/>
            <person name="Portetelle D."/>
            <person name="Perez-Alonso M."/>
            <person name="Boutry M."/>
            <person name="Bancroft I."/>
            <person name="Vos P."/>
            <person name="Hoheisel J."/>
            <person name="Zimmermann W."/>
            <person name="Wedler H."/>
            <person name="Ridley P."/>
            <person name="Langham S.-A."/>
            <person name="McCullagh B."/>
            <person name="Bilham L."/>
            <person name="Robben J."/>
            <person name="van der Schueren J."/>
            <person name="Grymonprez B."/>
            <person name="Chuang Y.-J."/>
            <person name="Vandenbussche F."/>
            <person name="Braeken M."/>
            <person name="Weltjens I."/>
            <person name="Voet M."/>
            <person name="Bastiaens I."/>
            <person name="Aert R."/>
            <person name="Defoor E."/>
            <person name="Weitzenegger T."/>
            <person name="Bothe G."/>
            <person name="Ramsperger U."/>
            <person name="Hilbert H."/>
            <person name="Braun M."/>
            <person name="Holzer E."/>
            <person name="Brandt A."/>
            <person name="Peters S."/>
            <person name="van Staveren M."/>
            <person name="Dirkse W."/>
            <person name="Mooijman P."/>
            <person name="Klein Lankhorst R."/>
            <person name="Rose M."/>
            <person name="Hauf J."/>
            <person name="Koetter P."/>
            <person name="Berneiser S."/>
            <person name="Hempel S."/>
            <person name="Feldpausch M."/>
            <person name="Lamberth S."/>
            <person name="Van den Daele H."/>
            <person name="De Keyser A."/>
            <person name="Buysshaert C."/>
            <person name="Gielen J."/>
            <person name="Villarroel R."/>
            <person name="De Clercq R."/>
            <person name="van Montagu M."/>
            <person name="Rogers J."/>
            <person name="Cronin A."/>
            <person name="Quail M.A."/>
            <person name="Bray-Allen S."/>
            <person name="Clark L."/>
            <person name="Doggett J."/>
            <person name="Hall S."/>
            <person name="Kay M."/>
            <person name="Lennard N."/>
            <person name="McLay K."/>
            <person name="Mayes R."/>
            <person name="Pettett A."/>
            <person name="Rajandream M.A."/>
            <person name="Lyne M."/>
            <person name="Benes V."/>
            <person name="Rechmann S."/>
            <person name="Borkova D."/>
            <person name="Bloecker H."/>
            <person name="Scharfe M."/>
            <person name="Grimm M."/>
            <person name="Loehnert T.-H."/>
            <person name="Dose S."/>
            <person name="de Haan M."/>
            <person name="Maarse A.C."/>
            <person name="Schaefer M."/>
            <person name="Mueller-Auer S."/>
            <person name="Gabel C."/>
            <person name="Fuchs M."/>
            <person name="Fartmann B."/>
            <person name="Granderath K."/>
            <person name="Dauner D."/>
            <person name="Herzl A."/>
            <person name="Neumann S."/>
            <person name="Argiriou A."/>
            <person name="Vitale D."/>
            <person name="Liguori R."/>
            <person name="Piravandi E."/>
            <person name="Massenet O."/>
            <person name="Quigley F."/>
            <person name="Clabauld G."/>
            <person name="Muendlein A."/>
            <person name="Felber R."/>
            <person name="Schnabl S."/>
            <person name="Hiller R."/>
            <person name="Schmidt W."/>
            <person name="Lecharny A."/>
            <person name="Aubourg S."/>
            <person name="Chefdor F."/>
            <person name="Cooke R."/>
            <person name="Berger C."/>
            <person name="Monfort A."/>
            <person name="Casacuberta E."/>
            <person name="Gibbons T."/>
            <person name="Weber N."/>
            <person name="Vandenbol M."/>
            <person name="Bargues M."/>
            <person name="Terol J."/>
            <person name="Torres A."/>
            <person name="Perez-Perez A."/>
            <person name="Purnelle B."/>
            <person name="Bent E."/>
            <person name="Johnson S."/>
            <person name="Tacon D."/>
            <person name="Jesse T."/>
            <person name="Heijnen L."/>
            <person name="Schwarz S."/>
            <person name="Scholler P."/>
            <person name="Heber S."/>
            <person name="Francs P."/>
            <person name="Bielke C."/>
            <person name="Frishman D."/>
            <person name="Haase D."/>
            <person name="Lemcke K."/>
            <person name="Mewes H.-W."/>
            <person name="Stocker S."/>
            <person name="Zaccaria P."/>
            <person name="Bevan M."/>
            <person name="Wilson R.K."/>
            <person name="de la Bastide M."/>
            <person name="Habermann K."/>
            <person name="Parnell L."/>
            <person name="Dedhia N."/>
            <person name="Gnoj L."/>
            <person name="Schutz K."/>
            <person name="Huang E."/>
            <person name="Spiegel L."/>
            <person name="Sekhon M."/>
            <person name="Murray J."/>
            <person name="Sheet P."/>
            <person name="Cordes M."/>
            <person name="Abu-Threideh J."/>
            <person name="Stoneking T."/>
            <person name="Kalicki J."/>
            <person name="Graves T."/>
            <person name="Harmon G."/>
            <person name="Edwards J."/>
            <person name="Latreille P."/>
            <person name="Courtney L."/>
            <person name="Cloud J."/>
            <person name="Abbott A."/>
            <person name="Scott K."/>
            <person name="Johnson D."/>
            <person name="Minx P."/>
            <person name="Bentley D."/>
            <person name="Fulton B."/>
            <person name="Miller N."/>
            <person name="Greco T."/>
            <person name="Kemp K."/>
            <person name="Kramer J."/>
            <person name="Fulton L."/>
            <person name="Mardis E."/>
            <person name="Dante M."/>
            <person name="Pepin K."/>
            <person name="Hillier L.W."/>
            <person name="Nelson J."/>
            <person name="Spieth J."/>
            <person name="Ryan E."/>
            <person name="Andrews S."/>
            <person name="Geisel C."/>
            <person name="Layman D."/>
            <person name="Du H."/>
            <person name="Ali J."/>
            <person name="Berghoff A."/>
            <person name="Jones K."/>
            <person name="Drone K."/>
            <person name="Cotton M."/>
            <person name="Joshu C."/>
            <person name="Antonoiu B."/>
            <person name="Zidanic M."/>
            <person name="Strong C."/>
            <person name="Sun H."/>
            <person name="Lamar B."/>
            <person name="Yordan C."/>
            <person name="Ma P."/>
            <person name="Zhong J."/>
            <person name="Preston R."/>
            <person name="Vil D."/>
            <person name="Shekher M."/>
            <person name="Matero A."/>
            <person name="Shah R."/>
            <person name="Swaby I.K."/>
            <person name="O'Shaughnessy A."/>
            <person name="Rodriguez M."/>
            <person name="Hoffman J."/>
            <person name="Till S."/>
            <person name="Granat S."/>
            <person name="Shohdy N."/>
            <person name="Hasegawa A."/>
            <person name="Hameed A."/>
            <person name="Lodhi M."/>
            <person name="Johnson A."/>
            <person name="Chen E."/>
            <person name="Marra M.A."/>
            <person name="Martienssen R."/>
            <person name="McCombie W.R."/>
        </authorList>
    </citation>
    <scope>NUCLEOTIDE SEQUENCE [LARGE SCALE GENOMIC DNA]</scope>
    <source>
        <strain>cv. Columbia</strain>
    </source>
</reference>
<reference key="2">
    <citation type="journal article" date="2017" name="Plant J.">
        <title>Araport11: a complete reannotation of the Arabidopsis thaliana reference genome.</title>
        <authorList>
            <person name="Cheng C.Y."/>
            <person name="Krishnakumar V."/>
            <person name="Chan A.P."/>
            <person name="Thibaud-Nissen F."/>
            <person name="Schobel S."/>
            <person name="Town C.D."/>
        </authorList>
    </citation>
    <scope>GENOME REANNOTATION</scope>
    <source>
        <strain>cv. Columbia</strain>
    </source>
</reference>
<reference key="3">
    <citation type="journal article" date="2003" name="Science">
        <title>Empirical analysis of transcriptional activity in the Arabidopsis genome.</title>
        <authorList>
            <person name="Yamada K."/>
            <person name="Lim J."/>
            <person name="Dale J.M."/>
            <person name="Chen H."/>
            <person name="Shinn P."/>
            <person name="Palm C.J."/>
            <person name="Southwick A.M."/>
            <person name="Wu H.C."/>
            <person name="Kim C.J."/>
            <person name="Nguyen M."/>
            <person name="Pham P.K."/>
            <person name="Cheuk R.F."/>
            <person name="Karlin-Newmann G."/>
            <person name="Liu S.X."/>
            <person name="Lam B."/>
            <person name="Sakano H."/>
            <person name="Wu T."/>
            <person name="Yu G."/>
            <person name="Miranda M."/>
            <person name="Quach H.L."/>
            <person name="Tripp M."/>
            <person name="Chang C.H."/>
            <person name="Lee J.M."/>
            <person name="Toriumi M.J."/>
            <person name="Chan M.M."/>
            <person name="Tang C.C."/>
            <person name="Onodera C.S."/>
            <person name="Deng J.M."/>
            <person name="Akiyama K."/>
            <person name="Ansari Y."/>
            <person name="Arakawa T."/>
            <person name="Banh J."/>
            <person name="Banno F."/>
            <person name="Bowser L."/>
            <person name="Brooks S.Y."/>
            <person name="Carninci P."/>
            <person name="Chao Q."/>
            <person name="Choy N."/>
            <person name="Enju A."/>
            <person name="Goldsmith A.D."/>
            <person name="Gurjal M."/>
            <person name="Hansen N.F."/>
            <person name="Hayashizaki Y."/>
            <person name="Johnson-Hopson C."/>
            <person name="Hsuan V.W."/>
            <person name="Iida K."/>
            <person name="Karnes M."/>
            <person name="Khan S."/>
            <person name="Koesema E."/>
            <person name="Ishida J."/>
            <person name="Jiang P.X."/>
            <person name="Jones T."/>
            <person name="Kawai J."/>
            <person name="Kamiya A."/>
            <person name="Meyers C."/>
            <person name="Nakajima M."/>
            <person name="Narusaka M."/>
            <person name="Seki M."/>
            <person name="Sakurai T."/>
            <person name="Satou M."/>
            <person name="Tamse R."/>
            <person name="Vaysberg M."/>
            <person name="Wallender E.K."/>
            <person name="Wong C."/>
            <person name="Yamamura Y."/>
            <person name="Yuan S."/>
            <person name="Shinozaki K."/>
            <person name="Davis R.W."/>
            <person name="Theologis A."/>
            <person name="Ecker J.R."/>
        </authorList>
    </citation>
    <scope>NUCLEOTIDE SEQUENCE [LARGE SCALE MRNA]</scope>
    <source>
        <strain>cv. Columbia</strain>
    </source>
</reference>
<reference key="4">
    <citation type="journal article" date="2003" name="Development">
        <title>Arabidopsis CROOKED encodes for the smallest subunit of the ARP2/3 complex and controls cell shape by region specific fine F-actin formation.</title>
        <authorList>
            <person name="Mathur J."/>
            <person name="Mathur N."/>
            <person name="Kirik V."/>
            <person name="Kernebeck B."/>
            <person name="Srinivas B.P."/>
            <person name="Huelskamp M."/>
        </authorList>
    </citation>
    <scope>FUNCTION</scope>
    <scope>DISRUPTION PHENOTYPE</scope>
    <scope>TISSUE SPECIFICITY</scope>
</reference>
<reference key="5">
    <citation type="journal article" date="2003" name="Plant Physiol.">
        <title>The putative Arabidopsis arp2/3 complex controls leaf cell morphogenesis.</title>
        <authorList>
            <person name="Li S."/>
            <person name="Blanchoin L."/>
            <person name="Yang Z."/>
            <person name="Lord E.M."/>
        </authorList>
    </citation>
    <scope>FUNCTION</scope>
    <scope>TISSUE SPECIFICITY</scope>
    <scope>IDENTIFICATION OF THE ARP2/3 COMPLEX</scope>
    <scope>DISRUPTION PHENOTYPE</scope>
</reference>
<reference key="6">
    <citation type="journal article" date="2005" name="Curr. Opin. Plant Biol.">
        <title>Breaking the WAVE complex: the point of Arabidopsis trichomes.</title>
        <authorList>
            <person name="Szymanski D.B."/>
        </authorList>
    </citation>
    <scope>REVIEW</scope>
</reference>
<reference key="7">
    <citation type="journal article" date="2012" name="Mol. Cell. Proteomics">
        <title>Comparative large-scale characterisation of plant vs. mammal proteins reveals similar and idiosyncratic N-alpha acetylation features.</title>
        <authorList>
            <person name="Bienvenut W.V."/>
            <person name="Sumpton D."/>
            <person name="Martinez A."/>
            <person name="Lilla S."/>
            <person name="Espagne C."/>
            <person name="Meinnel T."/>
            <person name="Giglione C."/>
        </authorList>
    </citation>
    <scope>ACETYLATION [LARGE SCALE ANALYSIS] AT ALA-2</scope>
    <scope>CLEAVAGE OF INITIATOR METHIONINE [LARGE SCALE ANALYSIS]</scope>
    <scope>IDENTIFICATION BY MASS SPECTROMETRY [LARGE SCALE ANALYSIS]</scope>
</reference>
<sequence>MAEFVEADNAEAIIARIETKSRKIESLLKQYKHVEALKTALEGSPPKTRDERCKSANWIVVHRALMAIKDIDGMLNALDVEYYDILMKYLYRGLSTGDRPTCDQCLKIHEKLTERAGLGCILRCLTDTINTV</sequence>
<accession>Q9M117</accession>
<accession>Q941F3</accession>
<keyword id="KW-0007">Acetylation</keyword>
<keyword id="KW-0009">Actin-binding</keyword>
<keyword id="KW-0966">Cell projection</keyword>
<keyword id="KW-0963">Cytoplasm</keyword>
<keyword id="KW-0206">Cytoskeleton</keyword>
<keyword id="KW-1185">Reference proteome</keyword>
<gene>
    <name type="primary">ARPC5A</name>
    <name type="synonym">CRK</name>
    <name type="ordered locus">At4g01710</name>
    <name type="ORF">T15B16.22</name>
</gene>
<dbReference type="EMBL" id="AF104919">
    <property type="status" value="NOT_ANNOTATED_CDS"/>
    <property type="molecule type" value="Genomic_DNA"/>
</dbReference>
<dbReference type="EMBL" id="AL161492">
    <property type="protein sequence ID" value="CAB77741.1"/>
    <property type="status" value="ALT_SEQ"/>
    <property type="molecule type" value="Genomic_DNA"/>
</dbReference>
<dbReference type="EMBL" id="CP002687">
    <property type="protein sequence ID" value="AEE82068.1"/>
    <property type="molecule type" value="Genomic_DNA"/>
</dbReference>
<dbReference type="EMBL" id="AY052191">
    <property type="protein sequence ID" value="AAK97662.1"/>
    <property type="molecule type" value="mRNA"/>
</dbReference>
<dbReference type="EMBL" id="AY143806">
    <property type="protein sequence ID" value="AAN28745.1"/>
    <property type="molecule type" value="mRNA"/>
</dbReference>
<dbReference type="PIR" id="A85022">
    <property type="entry name" value="A85022"/>
</dbReference>
<dbReference type="RefSeq" id="NP_567216.1">
    <property type="nucleotide sequence ID" value="NM_116401.3"/>
</dbReference>
<dbReference type="SMR" id="Q9M117"/>
<dbReference type="BioGRID" id="13378">
    <property type="interactions" value="1"/>
</dbReference>
<dbReference type="FunCoup" id="Q9M117">
    <property type="interactions" value="3362"/>
</dbReference>
<dbReference type="IntAct" id="Q9M117">
    <property type="interactions" value="1"/>
</dbReference>
<dbReference type="STRING" id="3702.Q9M117"/>
<dbReference type="iPTMnet" id="Q9M117"/>
<dbReference type="PaxDb" id="3702-AT4G01710.1"/>
<dbReference type="ProteomicsDB" id="246491"/>
<dbReference type="EnsemblPlants" id="AT4G01710.1">
    <property type="protein sequence ID" value="AT4G01710.1"/>
    <property type="gene ID" value="AT4G01710"/>
</dbReference>
<dbReference type="GeneID" id="828087"/>
<dbReference type="Gramene" id="AT4G01710.1">
    <property type="protein sequence ID" value="AT4G01710.1"/>
    <property type="gene ID" value="AT4G01710"/>
</dbReference>
<dbReference type="KEGG" id="ath:AT4G01710"/>
<dbReference type="Araport" id="AT4G01710"/>
<dbReference type="TAIR" id="AT4G01710">
    <property type="gene designation" value="CRK"/>
</dbReference>
<dbReference type="eggNOG" id="KOG3380">
    <property type="taxonomic scope" value="Eukaryota"/>
</dbReference>
<dbReference type="HOGENOM" id="CLU_101888_3_0_1"/>
<dbReference type="InParanoid" id="Q9M117"/>
<dbReference type="OMA" id="GMGCIMR"/>
<dbReference type="OrthoDB" id="429520at2759"/>
<dbReference type="PRO" id="PR:Q9M117"/>
<dbReference type="Proteomes" id="UP000006548">
    <property type="component" value="Chromosome 4"/>
</dbReference>
<dbReference type="ExpressionAtlas" id="Q9M117">
    <property type="expression patterns" value="baseline and differential"/>
</dbReference>
<dbReference type="GO" id="GO:0005885">
    <property type="term" value="C:Arp2/3 protein complex"/>
    <property type="evidence" value="ECO:0000304"/>
    <property type="project" value="TAIR"/>
</dbReference>
<dbReference type="GO" id="GO:0042995">
    <property type="term" value="C:cell projection"/>
    <property type="evidence" value="ECO:0007669"/>
    <property type="project" value="UniProtKB-SubCell"/>
</dbReference>
<dbReference type="GO" id="GO:0005737">
    <property type="term" value="C:cytoplasm"/>
    <property type="evidence" value="ECO:0007669"/>
    <property type="project" value="UniProtKB-KW"/>
</dbReference>
<dbReference type="GO" id="GO:0003779">
    <property type="term" value="F:actin binding"/>
    <property type="evidence" value="ECO:0000304"/>
    <property type="project" value="TAIR"/>
</dbReference>
<dbReference type="GO" id="GO:0030036">
    <property type="term" value="P:actin cytoskeleton organization"/>
    <property type="evidence" value="ECO:0000315"/>
    <property type="project" value="TAIR"/>
</dbReference>
<dbReference type="GO" id="GO:0007015">
    <property type="term" value="P:actin filament organization"/>
    <property type="evidence" value="ECO:0000304"/>
    <property type="project" value="TAIR"/>
</dbReference>
<dbReference type="GO" id="GO:0030041">
    <property type="term" value="P:actin filament polymerization"/>
    <property type="evidence" value="ECO:0000315"/>
    <property type="project" value="TAIR"/>
</dbReference>
<dbReference type="GO" id="GO:0034314">
    <property type="term" value="P:Arp2/3 complex-mediated actin nucleation"/>
    <property type="evidence" value="ECO:0007669"/>
    <property type="project" value="InterPro"/>
</dbReference>
<dbReference type="GO" id="GO:0009825">
    <property type="term" value="P:multidimensional cell growth"/>
    <property type="evidence" value="ECO:0000315"/>
    <property type="project" value="TAIR"/>
</dbReference>
<dbReference type="GO" id="GO:0030833">
    <property type="term" value="P:regulation of actin filament polymerization"/>
    <property type="evidence" value="ECO:0007669"/>
    <property type="project" value="InterPro"/>
</dbReference>
<dbReference type="GO" id="GO:0010090">
    <property type="term" value="P:trichome morphogenesis"/>
    <property type="evidence" value="ECO:0000315"/>
    <property type="project" value="TAIR"/>
</dbReference>
<dbReference type="FunFam" id="1.25.40.190:FF:000002">
    <property type="entry name" value="Actin-related protein 2/3 complex subunit 5"/>
    <property type="match status" value="1"/>
</dbReference>
<dbReference type="Gene3D" id="1.25.40.190">
    <property type="entry name" value="Actin-related protein 2/3 complex subunit 5"/>
    <property type="match status" value="1"/>
</dbReference>
<dbReference type="InterPro" id="IPR006789">
    <property type="entry name" value="ARPC5"/>
</dbReference>
<dbReference type="InterPro" id="IPR036743">
    <property type="entry name" value="ARPC5_sf"/>
</dbReference>
<dbReference type="PANTHER" id="PTHR12644">
    <property type="entry name" value="ARP2/3 COMPLEX 16 KD SUBUNIT P16-ARC"/>
    <property type="match status" value="1"/>
</dbReference>
<dbReference type="Pfam" id="PF04699">
    <property type="entry name" value="P16-Arc"/>
    <property type="match status" value="1"/>
</dbReference>
<dbReference type="SUPFAM" id="SSF69103">
    <property type="entry name" value="Arp2/3 complex 16 kDa subunit ARPC5"/>
    <property type="match status" value="1"/>
</dbReference>
<feature type="initiator methionine" description="Removed" evidence="5">
    <location>
        <position position="1"/>
    </location>
</feature>
<feature type="chain" id="PRO_0000422532" description="Actin-related protein 2/3 complex subunit 5A">
    <location>
        <begin position="2"/>
        <end position="132"/>
    </location>
</feature>
<feature type="modified residue" description="N-acetylalanine" evidence="5">
    <location>
        <position position="2"/>
    </location>
</feature>
<comment type="function">
    <text evidence="1 2 3">Functions as a component of the Arp2/3 complex which is involved in regulation of actin polymerization and together with an activating nucleation-promoting factor (NPF) mediates the formation of branched actin networks (By similarity). Arp2/3 complex plays a critical role in the control of cell morphogenesis via the modulation of cell polarity development.</text>
</comment>
<comment type="subunit">
    <text>Component of the Arp2/3 complex composed of ARP2, ARP3, ARPC1/p41-ARC, ARPC2/p34-ARC, ARPC3/p21-ARC, ARPC4/p20-ARC and ARPC5/p16-ARC.</text>
</comment>
<comment type="subcellular location">
    <subcellularLocation>
        <location evidence="1">Cytoplasm</location>
        <location evidence="1">Cytoskeleton</location>
    </subcellularLocation>
    <subcellularLocation>
        <location evidence="1">Cell projection</location>
    </subcellularLocation>
</comment>
<comment type="tissue specificity">
    <text evidence="2 3">Expressed at low levels in all tissues with a relatively highest expression in inflorescences.</text>
</comment>
<comment type="disruption phenotype">
    <text evidence="2 3">Distorted trichomes and altered epidermal cell types.</text>
</comment>
<comment type="similarity">
    <text evidence="4">Belongs to the ARPC5 family.</text>
</comment>
<comment type="sequence caution" evidence="4">
    <conflict type="erroneous gene model prediction">
        <sequence resource="EMBL-CDS" id="CAB77741"/>
    </conflict>
</comment>
<evidence type="ECO:0000250" key="1"/>
<evidence type="ECO:0000269" key="2">
    <source>
    </source>
</evidence>
<evidence type="ECO:0000269" key="3">
    <source>
    </source>
</evidence>
<evidence type="ECO:0000305" key="4"/>
<evidence type="ECO:0007744" key="5">
    <source>
    </source>
</evidence>
<organism>
    <name type="scientific">Arabidopsis thaliana</name>
    <name type="common">Mouse-ear cress</name>
    <dbReference type="NCBI Taxonomy" id="3702"/>
    <lineage>
        <taxon>Eukaryota</taxon>
        <taxon>Viridiplantae</taxon>
        <taxon>Streptophyta</taxon>
        <taxon>Embryophyta</taxon>
        <taxon>Tracheophyta</taxon>
        <taxon>Spermatophyta</taxon>
        <taxon>Magnoliopsida</taxon>
        <taxon>eudicotyledons</taxon>
        <taxon>Gunneridae</taxon>
        <taxon>Pentapetalae</taxon>
        <taxon>rosids</taxon>
        <taxon>malvids</taxon>
        <taxon>Brassicales</taxon>
        <taxon>Brassicaceae</taxon>
        <taxon>Camelineae</taxon>
        <taxon>Arabidopsis</taxon>
    </lineage>
</organism>
<name>ARC5A_ARATH</name>
<protein>
    <recommendedName>
        <fullName>Actin-related protein 2/3 complex subunit 5A</fullName>
    </recommendedName>
    <alternativeName>
        <fullName>Actin-related protein C5A</fullName>
    </alternativeName>
    <alternativeName>
        <fullName>Arp2/3 complex 16 kDa subunit</fullName>
        <shortName>p16-ARC</shortName>
    </alternativeName>
    <alternativeName>
        <fullName>Protein CROOKED</fullName>
    </alternativeName>
</protein>
<proteinExistence type="evidence at protein level"/>